<reference key="1">
    <citation type="journal article" date="2003" name="Nature">
        <title>The male-specific region of the human Y chromosome is a mosaic of discrete sequence classes.</title>
        <authorList>
            <person name="Skaletsky H."/>
            <person name="Kuroda-Kawaguchi T."/>
            <person name="Minx P.J."/>
            <person name="Cordum H.S."/>
            <person name="Hillier L.W."/>
            <person name="Brown L.G."/>
            <person name="Repping S."/>
            <person name="Pyntikova T."/>
            <person name="Ali J."/>
            <person name="Bieri T."/>
            <person name="Chinwalla A."/>
            <person name="Delehaunty A."/>
            <person name="Delehaunty K."/>
            <person name="Du H."/>
            <person name="Fewell G."/>
            <person name="Fulton L."/>
            <person name="Fulton R."/>
            <person name="Graves T.A."/>
            <person name="Hou S.-F."/>
            <person name="Latrielle P."/>
            <person name="Leonard S."/>
            <person name="Mardis E."/>
            <person name="Maupin R."/>
            <person name="McPherson J."/>
            <person name="Miner T."/>
            <person name="Nash W."/>
            <person name="Nguyen C."/>
            <person name="Ozersky P."/>
            <person name="Pepin K."/>
            <person name="Rock S."/>
            <person name="Rohlfing T."/>
            <person name="Scott K."/>
            <person name="Schultz B."/>
            <person name="Strong C."/>
            <person name="Tin-Wollam A."/>
            <person name="Yang S.-P."/>
            <person name="Waterston R.H."/>
            <person name="Wilson R.K."/>
            <person name="Rozen S."/>
            <person name="Page D.C."/>
        </authorList>
    </citation>
    <scope>NUCLEOTIDE SEQUENCE [LARGE SCALE GENOMIC DNA]</scope>
</reference>
<name>SL9P1_HUMAN</name>
<evidence type="ECO:0000255" key="1"/>
<evidence type="ECO:0000305" key="2"/>
<proteinExistence type="uncertain"/>
<sequence length="282" mass="30828">MVLQENGYGVEEDIPTLLMAASSMDDLLAITGFNTCLSIVFYSGGMINNAIASLRNVCISLLAGIVLGFFVRYFPSEDQKKITLKRGFLVLITFVSAVLGSQPIGLHGSGGLCTLVLHFIEWTKWSQEKMKVQKIITNVWDIFQPLLFGLVGAEVSVSLLESNIVGISVSTLSLALCVRILNIYLLMCFAGFSFKEKIFIALAWMPKATVQAVLGPLALETARVSTPHLETYAKDVMTVAFLAIMITAPNGALLMGILGPKMLTRHYDPSKIKLQLSTLEHH</sequence>
<keyword id="KW-0472">Membrane</keyword>
<keyword id="KW-1185">Reference proteome</keyword>
<keyword id="KW-0812">Transmembrane</keyword>
<keyword id="KW-1133">Transmembrane helix</keyword>
<feature type="chain" id="PRO_0000341232" description="Putative SLC9B1-like protein SLC9B1P1">
    <location>
        <begin position="1"/>
        <end position="282"/>
    </location>
</feature>
<feature type="transmembrane region" description="Helical" evidence="1">
    <location>
        <begin position="27"/>
        <end position="47"/>
    </location>
</feature>
<feature type="transmembrane region" description="Helical" evidence="1">
    <location>
        <begin position="51"/>
        <end position="71"/>
    </location>
</feature>
<feature type="transmembrane region" description="Helical" evidence="1">
    <location>
        <begin position="87"/>
        <end position="107"/>
    </location>
</feature>
<feature type="transmembrane region" description="Helical" evidence="1">
    <location>
        <begin position="135"/>
        <end position="155"/>
    </location>
</feature>
<feature type="transmembrane region" description="Helical" evidence="1">
    <location>
        <begin position="174"/>
        <end position="194"/>
    </location>
</feature>
<feature type="transmembrane region" description="Helical" evidence="1">
    <location>
        <begin position="198"/>
        <end position="218"/>
    </location>
</feature>
<feature type="transmembrane region" description="Helical" evidence="1">
    <location>
        <begin position="239"/>
        <end position="259"/>
    </location>
</feature>
<accession>A6NJY1</accession>
<protein>
    <recommendedName>
        <fullName>Putative SLC9B1-like protein SLC9B1P1</fullName>
    </recommendedName>
    <alternativeName>
        <fullName>Solute carrier family 9 subfamily B member 1 pseudogene 1</fullName>
    </alternativeName>
</protein>
<dbReference type="EMBL" id="AC134882">
    <property type="status" value="NOT_ANNOTATED_CDS"/>
    <property type="molecule type" value="Genomic_DNA"/>
</dbReference>
<dbReference type="SMR" id="A6NJY1"/>
<dbReference type="BioMuta" id="HGNC:37492"/>
<dbReference type="MassIVE" id="A6NJY1"/>
<dbReference type="PeptideAtlas" id="A6NJY1"/>
<dbReference type="AGR" id="HGNC:37492"/>
<dbReference type="GeneCards" id="SLC9B1P1"/>
<dbReference type="HGNC" id="HGNC:37492">
    <property type="gene designation" value="SLC9B1P1"/>
</dbReference>
<dbReference type="neXtProt" id="NX_A6NJY1"/>
<dbReference type="InParanoid" id="A6NJY1"/>
<dbReference type="PAN-GO" id="A6NJY1">
    <property type="GO annotations" value="0 GO annotations based on evolutionary models"/>
</dbReference>
<dbReference type="ChiTaRS" id="SLC9B1P1">
    <property type="organism name" value="human"/>
</dbReference>
<dbReference type="Pharos" id="A6NJY1">
    <property type="development level" value="Tdark"/>
</dbReference>
<dbReference type="Proteomes" id="UP000005640">
    <property type="component" value="Unplaced"/>
</dbReference>
<dbReference type="RNAct" id="A6NJY1">
    <property type="molecule type" value="protein"/>
</dbReference>
<dbReference type="GO" id="GO:0016020">
    <property type="term" value="C:membrane"/>
    <property type="evidence" value="ECO:0007669"/>
    <property type="project" value="UniProtKB-SubCell"/>
</dbReference>
<dbReference type="GO" id="GO:0015297">
    <property type="term" value="F:antiporter activity"/>
    <property type="evidence" value="ECO:0007669"/>
    <property type="project" value="InterPro"/>
</dbReference>
<dbReference type="GO" id="GO:0098662">
    <property type="term" value="P:inorganic cation transmembrane transport"/>
    <property type="evidence" value="ECO:0000318"/>
    <property type="project" value="GO_Central"/>
</dbReference>
<dbReference type="GO" id="GO:1902600">
    <property type="term" value="P:proton transmembrane transport"/>
    <property type="evidence" value="ECO:0007669"/>
    <property type="project" value="InterPro"/>
</dbReference>
<dbReference type="Gene3D" id="1.20.1530.20">
    <property type="match status" value="1"/>
</dbReference>
<dbReference type="InterPro" id="IPR006153">
    <property type="entry name" value="Cation/H_exchanger_TM"/>
</dbReference>
<dbReference type="InterPro" id="IPR051843">
    <property type="entry name" value="CPA1_transporter"/>
</dbReference>
<dbReference type="InterPro" id="IPR038770">
    <property type="entry name" value="Na+/solute_symporter_sf"/>
</dbReference>
<dbReference type="PANTHER" id="PTHR31102">
    <property type="match status" value="1"/>
</dbReference>
<dbReference type="PANTHER" id="PTHR31102:SF5">
    <property type="entry name" value="SLC9B1-LIKE PROTEIN SLC9B1P1-RELATED"/>
    <property type="match status" value="1"/>
</dbReference>
<dbReference type="Pfam" id="PF00999">
    <property type="entry name" value="Na_H_Exchanger"/>
    <property type="match status" value="1"/>
</dbReference>
<gene>
    <name type="primary">SLC9B1P1</name>
</gene>
<organism>
    <name type="scientific">Homo sapiens</name>
    <name type="common">Human</name>
    <dbReference type="NCBI Taxonomy" id="9606"/>
    <lineage>
        <taxon>Eukaryota</taxon>
        <taxon>Metazoa</taxon>
        <taxon>Chordata</taxon>
        <taxon>Craniata</taxon>
        <taxon>Vertebrata</taxon>
        <taxon>Euteleostomi</taxon>
        <taxon>Mammalia</taxon>
        <taxon>Eutheria</taxon>
        <taxon>Euarchontoglires</taxon>
        <taxon>Primates</taxon>
        <taxon>Haplorrhini</taxon>
        <taxon>Catarrhini</taxon>
        <taxon>Hominidae</taxon>
        <taxon>Homo</taxon>
    </lineage>
</organism>
<comment type="subcellular location">
    <subcellularLocation>
        <location evidence="2">Membrane</location>
        <topology evidence="2">Multi-pass membrane protein</topology>
    </subcellularLocation>
</comment>
<comment type="similarity">
    <text evidence="2">Belongs to the monovalent cation:proton antiporter 1 (CPA1) transporter (TC 2.A.36) family.</text>
</comment>
<comment type="caution">
    <text evidence="2">Could be the product of a pseudogene.</text>
</comment>